<reference evidence="3" key="1">
    <citation type="submission" date="2008-07" db="UniProtKB">
        <authorList>
            <person name="Almagro L."/>
            <person name="Ros Barcelo A."/>
            <person name="Pedreno M.A."/>
        </authorList>
    </citation>
    <scope>PROTEIN SEQUENCE</scope>
</reference>
<comment type="function">
    <text evidence="2">Removal of H(2)O(2), oxidation of toxic reductants, biosynthesis and degradation of lignin, suberization, auxin catabolism, response to environmental stresses such as wounding, pathogen attack and oxidative stress. These functions might be dependent on each isozyme/isoform in each plant tissue.</text>
</comment>
<comment type="catalytic activity">
    <reaction>
        <text>2 a phenolic donor + H2O2 = 2 a phenolic radical donor + 2 H2O</text>
        <dbReference type="Rhea" id="RHEA:56136"/>
        <dbReference type="ChEBI" id="CHEBI:15377"/>
        <dbReference type="ChEBI" id="CHEBI:16240"/>
        <dbReference type="ChEBI" id="CHEBI:139520"/>
        <dbReference type="ChEBI" id="CHEBI:139521"/>
        <dbReference type="EC" id="1.11.1.7"/>
    </reaction>
</comment>
<comment type="cofactor">
    <cofactor evidence="1 2">
        <name>Ca(2+)</name>
        <dbReference type="ChEBI" id="CHEBI:29108"/>
    </cofactor>
    <text evidence="1 2">Binds 2 calcium ions per subunit.</text>
</comment>
<comment type="cofactor">
    <cofactor evidence="1 2">
        <name>heme b</name>
        <dbReference type="ChEBI" id="CHEBI:60344"/>
    </cofactor>
    <text evidence="1 2">Binds 1 heme b (iron(II)-protoporphyrin IX) group per subunit.</text>
</comment>
<comment type="similarity">
    <text evidence="2">Belongs to the peroxidase family. Classical plant (class III) peroxidase subfamily.</text>
</comment>
<keyword id="KW-0106">Calcium</keyword>
<keyword id="KW-0903">Direct protein sequencing</keyword>
<keyword id="KW-0349">Heme</keyword>
<keyword id="KW-0376">Hydrogen peroxide</keyword>
<keyword id="KW-0408">Iron</keyword>
<keyword id="KW-0479">Metal-binding</keyword>
<keyword id="KW-0560">Oxidoreductase</keyword>
<keyword id="KW-0575">Peroxidase</keyword>
<protein>
    <recommendedName>
        <fullName evidence="1">Peroxidase 2</fullName>
        <ecNumber>1.11.1.7</ecNumber>
    </recommendedName>
</protein>
<evidence type="ECO:0000250" key="1">
    <source>
        <dbReference type="UniProtKB" id="P84714"/>
    </source>
</evidence>
<evidence type="ECO:0000255" key="2">
    <source>
        <dbReference type="PROSITE-ProRule" id="PRU00297"/>
    </source>
</evidence>
<evidence type="ECO:0000305" key="3"/>
<accession>P86055</accession>
<organism>
    <name type="scientific">Daucus carota</name>
    <name type="common">Wild carrot</name>
    <dbReference type="NCBI Taxonomy" id="4039"/>
    <lineage>
        <taxon>Eukaryota</taxon>
        <taxon>Viridiplantae</taxon>
        <taxon>Streptophyta</taxon>
        <taxon>Embryophyta</taxon>
        <taxon>Tracheophyta</taxon>
        <taxon>Spermatophyta</taxon>
        <taxon>Magnoliopsida</taxon>
        <taxon>eudicotyledons</taxon>
        <taxon>Gunneridae</taxon>
        <taxon>Pentapetalae</taxon>
        <taxon>asterids</taxon>
        <taxon>campanulids</taxon>
        <taxon>Apiales</taxon>
        <taxon>Apiaceae</taxon>
        <taxon>Apioideae</taxon>
        <taxon>Scandiceae</taxon>
        <taxon>Daucinae</taxon>
        <taxon>Daucus</taxon>
        <taxon>Daucus sect. Daucus</taxon>
    </lineage>
</organism>
<sequence length="15" mass="1729">SPPFTSDQDLYTDSR</sequence>
<feature type="chain" id="PRO_0000355594" description="Peroxidase 2">
    <location>
        <begin position="1" status="less than"/>
        <end position="15" status="greater than"/>
    </location>
</feature>
<feature type="unsure residue" description="F or M">
    <location>
        <position position="4"/>
    </location>
</feature>
<feature type="unsure residue" description="Q or K">
    <location>
        <position position="8"/>
    </location>
</feature>
<feature type="unsure residue" description="L or I">
    <location>
        <position position="10"/>
    </location>
</feature>
<feature type="non-terminal residue">
    <location>
        <position position="1"/>
    </location>
</feature>
<feature type="non-terminal residue">
    <location>
        <position position="15"/>
    </location>
</feature>
<proteinExistence type="evidence at protein level"/>
<name>PER2_DAUCA</name>
<dbReference type="EC" id="1.11.1.7"/>
<dbReference type="GO" id="GO:0140825">
    <property type="term" value="F:lactoperoxidase activity"/>
    <property type="evidence" value="ECO:0007669"/>
    <property type="project" value="UniProtKB-EC"/>
</dbReference>
<dbReference type="GO" id="GO:0046872">
    <property type="term" value="F:metal ion binding"/>
    <property type="evidence" value="ECO:0007669"/>
    <property type="project" value="UniProtKB-KW"/>
</dbReference>
<dbReference type="GO" id="GO:0042744">
    <property type="term" value="P:hydrogen peroxide catabolic process"/>
    <property type="evidence" value="ECO:0007669"/>
    <property type="project" value="UniProtKB-KW"/>
</dbReference>